<sequence>MKVIFLADVKGKGKKGEIKEMPTGYAQNFLIKKNLAKEATAQAIGELRGKQKSEEKAHAELVAEAQSIKAKLAEEATLVEFTEKVGPDGRTFGSITSKKIAEELQKQFGIKIDKRHIKVDSPIRSIGLIDVPVKIYQDIAGVIRLRVKEG</sequence>
<dbReference type="EMBL" id="CP000387">
    <property type="protein sequence ID" value="ABN45714.1"/>
    <property type="molecule type" value="Genomic_DNA"/>
</dbReference>
<dbReference type="RefSeq" id="WP_002910957.1">
    <property type="nucleotide sequence ID" value="NC_009009.1"/>
</dbReference>
<dbReference type="RefSeq" id="YP_001036264.1">
    <property type="nucleotide sequence ID" value="NC_009009.1"/>
</dbReference>
<dbReference type="SMR" id="A3CRA9"/>
<dbReference type="STRING" id="388919.SSA_2357"/>
<dbReference type="KEGG" id="ssa:SSA_2357"/>
<dbReference type="PATRIC" id="fig|388919.9.peg.2238"/>
<dbReference type="eggNOG" id="COG0359">
    <property type="taxonomic scope" value="Bacteria"/>
</dbReference>
<dbReference type="HOGENOM" id="CLU_078938_3_2_9"/>
<dbReference type="OrthoDB" id="9788336at2"/>
<dbReference type="Proteomes" id="UP000002148">
    <property type="component" value="Chromosome"/>
</dbReference>
<dbReference type="GO" id="GO:1990904">
    <property type="term" value="C:ribonucleoprotein complex"/>
    <property type="evidence" value="ECO:0007669"/>
    <property type="project" value="UniProtKB-KW"/>
</dbReference>
<dbReference type="GO" id="GO:0005840">
    <property type="term" value="C:ribosome"/>
    <property type="evidence" value="ECO:0007669"/>
    <property type="project" value="UniProtKB-KW"/>
</dbReference>
<dbReference type="GO" id="GO:0019843">
    <property type="term" value="F:rRNA binding"/>
    <property type="evidence" value="ECO:0007669"/>
    <property type="project" value="UniProtKB-UniRule"/>
</dbReference>
<dbReference type="GO" id="GO:0003735">
    <property type="term" value="F:structural constituent of ribosome"/>
    <property type="evidence" value="ECO:0007669"/>
    <property type="project" value="InterPro"/>
</dbReference>
<dbReference type="GO" id="GO:0006412">
    <property type="term" value="P:translation"/>
    <property type="evidence" value="ECO:0007669"/>
    <property type="project" value="UniProtKB-UniRule"/>
</dbReference>
<dbReference type="FunFam" id="3.40.5.10:FF:000002">
    <property type="entry name" value="50S ribosomal protein L9"/>
    <property type="match status" value="1"/>
</dbReference>
<dbReference type="Gene3D" id="3.10.430.100">
    <property type="entry name" value="Ribosomal protein L9, C-terminal domain"/>
    <property type="match status" value="1"/>
</dbReference>
<dbReference type="Gene3D" id="3.40.5.10">
    <property type="entry name" value="Ribosomal protein L9, N-terminal domain"/>
    <property type="match status" value="1"/>
</dbReference>
<dbReference type="HAMAP" id="MF_00503">
    <property type="entry name" value="Ribosomal_bL9"/>
    <property type="match status" value="1"/>
</dbReference>
<dbReference type="InterPro" id="IPR000244">
    <property type="entry name" value="Ribosomal_bL9"/>
</dbReference>
<dbReference type="InterPro" id="IPR009027">
    <property type="entry name" value="Ribosomal_bL9/RNase_H1_N"/>
</dbReference>
<dbReference type="InterPro" id="IPR020594">
    <property type="entry name" value="Ribosomal_bL9_bac/chp"/>
</dbReference>
<dbReference type="InterPro" id="IPR020069">
    <property type="entry name" value="Ribosomal_bL9_C"/>
</dbReference>
<dbReference type="InterPro" id="IPR036791">
    <property type="entry name" value="Ribosomal_bL9_C_sf"/>
</dbReference>
<dbReference type="InterPro" id="IPR020070">
    <property type="entry name" value="Ribosomal_bL9_N"/>
</dbReference>
<dbReference type="InterPro" id="IPR036935">
    <property type="entry name" value="Ribosomal_bL9_N_sf"/>
</dbReference>
<dbReference type="NCBIfam" id="TIGR00158">
    <property type="entry name" value="L9"/>
    <property type="match status" value="1"/>
</dbReference>
<dbReference type="PANTHER" id="PTHR21368">
    <property type="entry name" value="50S RIBOSOMAL PROTEIN L9"/>
    <property type="match status" value="1"/>
</dbReference>
<dbReference type="Pfam" id="PF03948">
    <property type="entry name" value="Ribosomal_L9_C"/>
    <property type="match status" value="1"/>
</dbReference>
<dbReference type="Pfam" id="PF01281">
    <property type="entry name" value="Ribosomal_L9_N"/>
    <property type="match status" value="1"/>
</dbReference>
<dbReference type="SUPFAM" id="SSF55658">
    <property type="entry name" value="L9 N-domain-like"/>
    <property type="match status" value="1"/>
</dbReference>
<dbReference type="SUPFAM" id="SSF55653">
    <property type="entry name" value="Ribosomal protein L9 C-domain"/>
    <property type="match status" value="1"/>
</dbReference>
<feature type="chain" id="PRO_1000014872" description="Large ribosomal subunit protein bL9">
    <location>
        <begin position="1"/>
        <end position="150"/>
    </location>
</feature>
<proteinExistence type="inferred from homology"/>
<protein>
    <recommendedName>
        <fullName evidence="1">Large ribosomal subunit protein bL9</fullName>
    </recommendedName>
    <alternativeName>
        <fullName evidence="2">50S ribosomal protein L9</fullName>
    </alternativeName>
</protein>
<reference key="1">
    <citation type="journal article" date="2007" name="J. Bacteriol.">
        <title>Genome of the opportunistic pathogen Streptococcus sanguinis.</title>
        <authorList>
            <person name="Xu P."/>
            <person name="Alves J.M."/>
            <person name="Kitten T."/>
            <person name="Brown A."/>
            <person name="Chen Z."/>
            <person name="Ozaki L.S."/>
            <person name="Manque P."/>
            <person name="Ge X."/>
            <person name="Serrano M.G."/>
            <person name="Puiu D."/>
            <person name="Hendricks S."/>
            <person name="Wang Y."/>
            <person name="Chaplin M.D."/>
            <person name="Akan D."/>
            <person name="Paik S."/>
            <person name="Peterson D.L."/>
            <person name="Macrina F.L."/>
            <person name="Buck G.A."/>
        </authorList>
    </citation>
    <scope>NUCLEOTIDE SEQUENCE [LARGE SCALE GENOMIC DNA]</scope>
    <source>
        <strain>SK36</strain>
    </source>
</reference>
<comment type="function">
    <text evidence="1">Binds to the 23S rRNA.</text>
</comment>
<comment type="similarity">
    <text evidence="1">Belongs to the bacterial ribosomal protein bL9 family.</text>
</comment>
<keyword id="KW-1185">Reference proteome</keyword>
<keyword id="KW-0687">Ribonucleoprotein</keyword>
<keyword id="KW-0689">Ribosomal protein</keyword>
<keyword id="KW-0694">RNA-binding</keyword>
<keyword id="KW-0699">rRNA-binding</keyword>
<evidence type="ECO:0000255" key="1">
    <source>
        <dbReference type="HAMAP-Rule" id="MF_00503"/>
    </source>
</evidence>
<evidence type="ECO:0000305" key="2"/>
<accession>A3CRA9</accession>
<name>RL9_STRSV</name>
<gene>
    <name evidence="1" type="primary">rplI</name>
    <name type="ordered locus">SSA_2357</name>
</gene>
<organism>
    <name type="scientific">Streptococcus sanguinis (strain SK36)</name>
    <dbReference type="NCBI Taxonomy" id="388919"/>
    <lineage>
        <taxon>Bacteria</taxon>
        <taxon>Bacillati</taxon>
        <taxon>Bacillota</taxon>
        <taxon>Bacilli</taxon>
        <taxon>Lactobacillales</taxon>
        <taxon>Streptococcaceae</taxon>
        <taxon>Streptococcus</taxon>
    </lineage>
</organism>